<feature type="chain" id="PRO_0000277697" description="Arabinose import ATP-binding protein AraG 1">
    <location>
        <begin position="1"/>
        <end position="503"/>
    </location>
</feature>
<feature type="domain" description="ABC transporter 1" evidence="1">
    <location>
        <begin position="5"/>
        <end position="240"/>
    </location>
</feature>
<feature type="domain" description="ABC transporter 2" evidence="1">
    <location>
        <begin position="251"/>
        <end position="497"/>
    </location>
</feature>
<feature type="binding site" evidence="1">
    <location>
        <begin position="37"/>
        <end position="44"/>
    </location>
    <ligand>
        <name>ATP</name>
        <dbReference type="ChEBI" id="CHEBI:30616"/>
    </ligand>
</feature>
<reference key="1">
    <citation type="submission" date="2006-08" db="EMBL/GenBank/DDBJ databases">
        <title>Complete sequence of chromosome 1 of Burkholderia cenocepacia HI2424.</title>
        <authorList>
            <person name="Copeland A."/>
            <person name="Lucas S."/>
            <person name="Lapidus A."/>
            <person name="Barry K."/>
            <person name="Detter J.C."/>
            <person name="Glavina del Rio T."/>
            <person name="Hammon N."/>
            <person name="Israni S."/>
            <person name="Pitluck S."/>
            <person name="Chain P."/>
            <person name="Malfatti S."/>
            <person name="Shin M."/>
            <person name="Vergez L."/>
            <person name="Schmutz J."/>
            <person name="Larimer F."/>
            <person name="Land M."/>
            <person name="Hauser L."/>
            <person name="Kyrpides N."/>
            <person name="Kim E."/>
            <person name="LiPuma J.J."/>
            <person name="Gonzalez C.F."/>
            <person name="Konstantinidis K."/>
            <person name="Tiedje J.M."/>
            <person name="Richardson P."/>
        </authorList>
    </citation>
    <scope>NUCLEOTIDE SEQUENCE [LARGE SCALE GENOMIC DNA]</scope>
    <source>
        <strain>HI2424</strain>
    </source>
</reference>
<comment type="function">
    <text evidence="1">Part of the ABC transporter complex AraFGH involved in arabinose import. Responsible for energy coupling to the transport system.</text>
</comment>
<comment type="catalytic activity">
    <reaction evidence="1">
        <text>L-arabinose(out) + ATP + H2O = L-arabinose(in) + ADP + phosphate + H(+)</text>
        <dbReference type="Rhea" id="RHEA:30007"/>
        <dbReference type="ChEBI" id="CHEBI:15377"/>
        <dbReference type="ChEBI" id="CHEBI:15378"/>
        <dbReference type="ChEBI" id="CHEBI:17535"/>
        <dbReference type="ChEBI" id="CHEBI:30616"/>
        <dbReference type="ChEBI" id="CHEBI:43474"/>
        <dbReference type="ChEBI" id="CHEBI:456216"/>
        <dbReference type="EC" id="7.5.2.12"/>
    </reaction>
</comment>
<comment type="subunit">
    <text evidence="1">The complex is composed of two ATP-binding proteins (AraG), two transmembrane proteins (AraH) and a solute-binding protein (AraF).</text>
</comment>
<comment type="subcellular location">
    <subcellularLocation>
        <location evidence="1">Cell inner membrane</location>
        <topology evidence="1">Peripheral membrane protein</topology>
    </subcellularLocation>
</comment>
<comment type="similarity">
    <text evidence="1">Belongs to the ABC transporter superfamily. Arabinose importer (TC 3.A.1.2.2) family.</text>
</comment>
<organism>
    <name type="scientific">Burkholderia cenocepacia (strain HI2424)</name>
    <dbReference type="NCBI Taxonomy" id="331272"/>
    <lineage>
        <taxon>Bacteria</taxon>
        <taxon>Pseudomonadati</taxon>
        <taxon>Pseudomonadota</taxon>
        <taxon>Betaproteobacteria</taxon>
        <taxon>Burkholderiales</taxon>
        <taxon>Burkholderiaceae</taxon>
        <taxon>Burkholderia</taxon>
        <taxon>Burkholderia cepacia complex</taxon>
    </lineage>
</organism>
<name>ARAG1_BURCH</name>
<protein>
    <recommendedName>
        <fullName evidence="1">Arabinose import ATP-binding protein AraG 1</fullName>
        <ecNumber evidence="1">7.5.2.12</ecNumber>
    </recommendedName>
</protein>
<proteinExistence type="inferred from homology"/>
<evidence type="ECO:0000255" key="1">
    <source>
        <dbReference type="HAMAP-Rule" id="MF_01721"/>
    </source>
</evidence>
<keyword id="KW-0067">ATP-binding</keyword>
<keyword id="KW-0997">Cell inner membrane</keyword>
<keyword id="KW-1003">Cell membrane</keyword>
<keyword id="KW-0472">Membrane</keyword>
<keyword id="KW-0547">Nucleotide-binding</keyword>
<keyword id="KW-0677">Repeat</keyword>
<keyword id="KW-0762">Sugar transport</keyword>
<keyword id="KW-1278">Translocase</keyword>
<keyword id="KW-0813">Transport</keyword>
<dbReference type="EC" id="7.5.2.12" evidence="1"/>
<dbReference type="EMBL" id="CP000458">
    <property type="protein sequence ID" value="ABK07375.1"/>
    <property type="molecule type" value="Genomic_DNA"/>
</dbReference>
<dbReference type="SMR" id="A0K4E8"/>
<dbReference type="KEGG" id="bch:Bcen2424_0622"/>
<dbReference type="HOGENOM" id="CLU_000604_92_3_4"/>
<dbReference type="GO" id="GO:0005886">
    <property type="term" value="C:plasma membrane"/>
    <property type="evidence" value="ECO:0007669"/>
    <property type="project" value="UniProtKB-SubCell"/>
</dbReference>
<dbReference type="GO" id="GO:0015612">
    <property type="term" value="F:ABC-type L-arabinose transporter activity"/>
    <property type="evidence" value="ECO:0007669"/>
    <property type="project" value="UniProtKB-EC"/>
</dbReference>
<dbReference type="GO" id="GO:0005524">
    <property type="term" value="F:ATP binding"/>
    <property type="evidence" value="ECO:0007669"/>
    <property type="project" value="UniProtKB-KW"/>
</dbReference>
<dbReference type="GO" id="GO:0016887">
    <property type="term" value="F:ATP hydrolysis activity"/>
    <property type="evidence" value="ECO:0007669"/>
    <property type="project" value="InterPro"/>
</dbReference>
<dbReference type="CDD" id="cd03216">
    <property type="entry name" value="ABC_Carb_Monos_I"/>
    <property type="match status" value="1"/>
</dbReference>
<dbReference type="CDD" id="cd03215">
    <property type="entry name" value="ABC_Carb_Monos_II"/>
    <property type="match status" value="1"/>
</dbReference>
<dbReference type="FunFam" id="3.40.50.300:FF:000127">
    <property type="entry name" value="Ribose import ATP-binding protein RbsA"/>
    <property type="match status" value="1"/>
</dbReference>
<dbReference type="Gene3D" id="3.40.50.300">
    <property type="entry name" value="P-loop containing nucleotide triphosphate hydrolases"/>
    <property type="match status" value="2"/>
</dbReference>
<dbReference type="InterPro" id="IPR003593">
    <property type="entry name" value="AAA+_ATPase"/>
</dbReference>
<dbReference type="InterPro" id="IPR050107">
    <property type="entry name" value="ABC_carbohydrate_import_ATPase"/>
</dbReference>
<dbReference type="InterPro" id="IPR003439">
    <property type="entry name" value="ABC_transporter-like_ATP-bd"/>
</dbReference>
<dbReference type="InterPro" id="IPR017871">
    <property type="entry name" value="ABC_transporter-like_CS"/>
</dbReference>
<dbReference type="InterPro" id="IPR027417">
    <property type="entry name" value="P-loop_NTPase"/>
</dbReference>
<dbReference type="NCBIfam" id="NF008442">
    <property type="entry name" value="PRK11288.1"/>
    <property type="match status" value="1"/>
</dbReference>
<dbReference type="PANTHER" id="PTHR43790:SF6">
    <property type="entry name" value="ARABINOSE IMPORT ATP-BINDING PROTEIN ARAG"/>
    <property type="match status" value="1"/>
</dbReference>
<dbReference type="PANTHER" id="PTHR43790">
    <property type="entry name" value="CARBOHYDRATE TRANSPORT ATP-BINDING PROTEIN MG119-RELATED"/>
    <property type="match status" value="1"/>
</dbReference>
<dbReference type="Pfam" id="PF00005">
    <property type="entry name" value="ABC_tran"/>
    <property type="match status" value="2"/>
</dbReference>
<dbReference type="SMART" id="SM00382">
    <property type="entry name" value="AAA"/>
    <property type="match status" value="2"/>
</dbReference>
<dbReference type="SUPFAM" id="SSF52540">
    <property type="entry name" value="P-loop containing nucleoside triphosphate hydrolases"/>
    <property type="match status" value="2"/>
</dbReference>
<dbReference type="PROSITE" id="PS00211">
    <property type="entry name" value="ABC_TRANSPORTER_1"/>
    <property type="match status" value="1"/>
</dbReference>
<dbReference type="PROSITE" id="PS50893">
    <property type="entry name" value="ABC_TRANSPORTER_2"/>
    <property type="match status" value="2"/>
</dbReference>
<dbReference type="PROSITE" id="PS51268">
    <property type="entry name" value="ARAG"/>
    <property type="match status" value="1"/>
</dbReference>
<gene>
    <name evidence="1" type="primary">araG1</name>
    <name type="ordered locus">Bcen2424_0622</name>
</gene>
<sequence>MSAALRFDNIGKVFPGVRALDGISFDVHAGEVHGLMGENGAGKSTLLKILGGEYQPDAGSVLVDGRPVQFANAAASIAAGIAVIHQELQYVPDLTVAENLLLGRLPNAFGWVKKREAKRYVRERLAEMGVDLDPDARLGRLSIAQRQMVEICKALMRNARVIALDEPTSSLSHRETEVLFKLVDDLRAQGRALIYISHRMDEIYRLCDACTIFRDGRKIASHDALADVPRERLVAEMVGREIADIYHYAPRTLGDVRFSAEGVDGPALREPASFSVRAGEIVGFFGLVGAGRSELMRLVYGADRRRAGALTLDGKRIDVKRTGDAIRHGIVLCPEDRKEEGIIAIASVAENINISCRRHSLRAGLFINGKTESETADRFIQRLKIKTPNRRQKIRFLSGGNQQKAILSRWLAEPDLKVVILDEPTRGIDVGAKHEIYDVIYRLAERGCAIVMVSSELPEVLGVSDRIVVMREGRIAGELPRADANEHAVLNLALPQTSAVEAA</sequence>
<accession>A0K4E8</accession>